<evidence type="ECO:0000255" key="1">
    <source>
        <dbReference type="HAMAP-Rule" id="MF_01592"/>
    </source>
</evidence>
<feature type="chain" id="PRO_1000215649" description="Uncharacterized Nudix hydrolase NudL">
    <location>
        <begin position="1"/>
        <end position="192"/>
    </location>
</feature>
<feature type="domain" description="Nudix hydrolase" evidence="1">
    <location>
        <begin position="29"/>
        <end position="160"/>
    </location>
</feature>
<feature type="short sequence motif" description="Nudix box">
    <location>
        <begin position="67"/>
        <end position="89"/>
    </location>
</feature>
<feature type="binding site" evidence="1">
    <location>
        <position position="83"/>
    </location>
    <ligand>
        <name>Mg(2+)</name>
        <dbReference type="ChEBI" id="CHEBI:18420"/>
    </ligand>
</feature>
<feature type="binding site" evidence="1">
    <location>
        <position position="87"/>
    </location>
    <ligand>
        <name>Mg(2+)</name>
        <dbReference type="ChEBI" id="CHEBI:18420"/>
    </ligand>
</feature>
<accession>C4ZZG9</accession>
<name>NUDL_ECOBW</name>
<protein>
    <recommendedName>
        <fullName evidence="1">Uncharacterized Nudix hydrolase NudL</fullName>
        <ecNumber evidence="1">3.6.1.-</ecNumber>
    </recommendedName>
</protein>
<sequence>MEYRSLTLDDFLSRFQLLRPQINRETLNHRQAAVLIPIVRRPQPGLLLTQRSIHLRKHAGQVAFPGGAVDDTDASAIAAALREAEEEVAIPPSAVEVIGVLPPVDSVTGYQVTPVVGIIPPDLPYRASEDEVSAVFEMPLAQALHLGRYHPLDIYRRGDSHRVWLSWYEQYFVWGMTAGIIRELALQIGVKP</sequence>
<dbReference type="EC" id="3.6.1.-" evidence="1"/>
<dbReference type="EMBL" id="CP001396">
    <property type="protein sequence ID" value="ACR64698.1"/>
    <property type="molecule type" value="Genomic_DNA"/>
</dbReference>
<dbReference type="RefSeq" id="WP_000456715.1">
    <property type="nucleotide sequence ID" value="NC_012759.1"/>
</dbReference>
<dbReference type="SMR" id="C4ZZG9"/>
<dbReference type="KEGG" id="ebw:BWG_1626"/>
<dbReference type="HOGENOM" id="CLU_040940_5_2_6"/>
<dbReference type="GO" id="GO:0010945">
    <property type="term" value="F:coenzyme A diphosphatase activity"/>
    <property type="evidence" value="ECO:0007669"/>
    <property type="project" value="InterPro"/>
</dbReference>
<dbReference type="GO" id="GO:0000287">
    <property type="term" value="F:magnesium ion binding"/>
    <property type="evidence" value="ECO:0007669"/>
    <property type="project" value="UniProtKB-UniRule"/>
</dbReference>
<dbReference type="GO" id="GO:0030145">
    <property type="term" value="F:manganese ion binding"/>
    <property type="evidence" value="ECO:0007669"/>
    <property type="project" value="UniProtKB-UniRule"/>
</dbReference>
<dbReference type="GO" id="GO:0009132">
    <property type="term" value="P:nucleoside diphosphate metabolic process"/>
    <property type="evidence" value="ECO:0007669"/>
    <property type="project" value="InterPro"/>
</dbReference>
<dbReference type="CDD" id="cd03426">
    <property type="entry name" value="NUDIX_CoAse_Nudt7"/>
    <property type="match status" value="1"/>
</dbReference>
<dbReference type="FunFam" id="3.90.79.10:FF:000013">
    <property type="entry name" value="Uncharacterized Nudix hydrolase NudL"/>
    <property type="match status" value="1"/>
</dbReference>
<dbReference type="Gene3D" id="3.90.79.10">
    <property type="entry name" value="Nucleoside Triphosphate Pyrophosphohydrolase"/>
    <property type="match status" value="1"/>
</dbReference>
<dbReference type="HAMAP" id="MF_01592">
    <property type="entry name" value="Nudix_NudL"/>
    <property type="match status" value="1"/>
</dbReference>
<dbReference type="InterPro" id="IPR045121">
    <property type="entry name" value="CoAse"/>
</dbReference>
<dbReference type="InterPro" id="IPR015797">
    <property type="entry name" value="NUDIX_hydrolase-like_dom_sf"/>
</dbReference>
<dbReference type="InterPro" id="IPR000086">
    <property type="entry name" value="NUDIX_hydrolase_dom"/>
</dbReference>
<dbReference type="InterPro" id="IPR000059">
    <property type="entry name" value="NUDIX_hydrolase_NudL_CS"/>
</dbReference>
<dbReference type="InterPro" id="IPR023735">
    <property type="entry name" value="Nudix_NudL"/>
</dbReference>
<dbReference type="NCBIfam" id="NF007980">
    <property type="entry name" value="PRK10707.1"/>
    <property type="match status" value="1"/>
</dbReference>
<dbReference type="PANTHER" id="PTHR12992:SF11">
    <property type="entry name" value="MITOCHONDRIAL COENZYME A DIPHOSPHATASE NUDT8"/>
    <property type="match status" value="1"/>
</dbReference>
<dbReference type="PANTHER" id="PTHR12992">
    <property type="entry name" value="NUDIX HYDROLASE"/>
    <property type="match status" value="1"/>
</dbReference>
<dbReference type="Pfam" id="PF00293">
    <property type="entry name" value="NUDIX"/>
    <property type="match status" value="1"/>
</dbReference>
<dbReference type="SUPFAM" id="SSF55811">
    <property type="entry name" value="Nudix"/>
    <property type="match status" value="1"/>
</dbReference>
<dbReference type="PROSITE" id="PS51462">
    <property type="entry name" value="NUDIX"/>
    <property type="match status" value="1"/>
</dbReference>
<dbReference type="PROSITE" id="PS01293">
    <property type="entry name" value="NUDIX_COA"/>
    <property type="match status" value="1"/>
</dbReference>
<organism>
    <name type="scientific">Escherichia coli (strain K12 / MC4100 / BW2952)</name>
    <dbReference type="NCBI Taxonomy" id="595496"/>
    <lineage>
        <taxon>Bacteria</taxon>
        <taxon>Pseudomonadati</taxon>
        <taxon>Pseudomonadota</taxon>
        <taxon>Gammaproteobacteria</taxon>
        <taxon>Enterobacterales</taxon>
        <taxon>Enterobacteriaceae</taxon>
        <taxon>Escherichia</taxon>
    </lineage>
</organism>
<gene>
    <name evidence="1" type="primary">nudL</name>
    <name type="ordered locus">BWG_1626</name>
</gene>
<keyword id="KW-0378">Hydrolase</keyword>
<keyword id="KW-0460">Magnesium</keyword>
<keyword id="KW-0464">Manganese</keyword>
<keyword id="KW-0479">Metal-binding</keyword>
<proteinExistence type="inferred from homology"/>
<comment type="function">
    <text evidence="1">Probably mediates the hydrolysis of some nucleoside diphosphate derivatives.</text>
</comment>
<comment type="cofactor">
    <cofactor evidence="1">
        <name>Mn(2+)</name>
        <dbReference type="ChEBI" id="CHEBI:29035"/>
    </cofactor>
    <cofactor evidence="1">
        <name>Mg(2+)</name>
        <dbReference type="ChEBI" id="CHEBI:18420"/>
    </cofactor>
</comment>
<comment type="similarity">
    <text evidence="1">Belongs to the Nudix hydrolase family. PCD1 subfamily.</text>
</comment>
<reference key="1">
    <citation type="journal article" date="2009" name="J. Bacteriol.">
        <title>Genomic sequencing reveals regulatory mutations and recombinational events in the widely used MC4100 lineage of Escherichia coli K-12.</title>
        <authorList>
            <person name="Ferenci T."/>
            <person name="Zhou Z."/>
            <person name="Betteridge T."/>
            <person name="Ren Y."/>
            <person name="Liu Y."/>
            <person name="Feng L."/>
            <person name="Reeves P.R."/>
            <person name="Wang L."/>
        </authorList>
    </citation>
    <scope>NUCLEOTIDE SEQUENCE [LARGE SCALE GENOMIC DNA]</scope>
    <source>
        <strain>K12 / MC4100 / BW2952</strain>
    </source>
</reference>